<sequence length="519" mass="58512">MNLLSLLLILLGIILGVVGGYVVARNLLLQKQSQARQTAEDIVNQAHKEADNIKKEKLLEAKEENQILREQTEAELRERRSELQRQETRLLQKEENLERKSDLLDKKDEILEQKESKIEEKQQQVDAKESSVQTLIMKHEQELERISGLTQEEAINEQLQRVEEELSQDIAVLVKEKEKEAKEKVDKTAKELLATAVQRLAADHTSESTVSVVNLPNDEMKGRIIGREGRNIRTLETLTGIDLIIDDTPEAVILSGFDPIRREIARTALVNLVSDGRIHPGRIEDMVEKARKEVDDIIREAGEQATFEVNAHNMHPDLVKIVGRLNYRTSYGQNVLKHSIEVAHLASMLAAELGEDETLAKRAGLLHDVGKAIDHEVEGSHVEIGVELAKKYGENETVINAIHSHHGDVEPTSIISILVAAADALSAARPGARKETLENYIRRLERLETLSESYDGVEKAFAIQAGREIRVIVSPEEIDDLKSYRLARDIKNQIEDELQYPGHIKVTVVRETRAVEYAK</sequence>
<evidence type="ECO:0000255" key="1">
    <source>
        <dbReference type="HAMAP-Rule" id="MF_00335"/>
    </source>
</evidence>
<evidence type="ECO:0000255" key="2">
    <source>
        <dbReference type="PROSITE-ProRule" id="PRU01175"/>
    </source>
</evidence>
<reference key="1">
    <citation type="journal article" date="2007" name="PLoS ONE">
        <title>Molecular correlates of host specialization in Staphylococcus aureus.</title>
        <authorList>
            <person name="Herron-Olson L."/>
            <person name="Fitzgerald J.R."/>
            <person name="Musser J.M."/>
            <person name="Kapur V."/>
        </authorList>
    </citation>
    <scope>NUCLEOTIDE SEQUENCE [LARGE SCALE GENOMIC DNA]</scope>
    <source>
        <strain>bovine RF122 / ET3-1</strain>
    </source>
</reference>
<proteinExistence type="inferred from homology"/>
<organism>
    <name type="scientific">Staphylococcus aureus (strain bovine RF122 / ET3-1)</name>
    <dbReference type="NCBI Taxonomy" id="273036"/>
    <lineage>
        <taxon>Bacteria</taxon>
        <taxon>Bacillati</taxon>
        <taxon>Bacillota</taxon>
        <taxon>Bacilli</taxon>
        <taxon>Bacillales</taxon>
        <taxon>Staphylococcaceae</taxon>
        <taxon>Staphylococcus</taxon>
    </lineage>
</organism>
<dbReference type="EC" id="3.1.-.-" evidence="1"/>
<dbReference type="EMBL" id="AJ938182">
    <property type="protein sequence ID" value="CAI80837.1"/>
    <property type="molecule type" value="Genomic_DNA"/>
</dbReference>
<dbReference type="RefSeq" id="WP_001050913.1">
    <property type="nucleotide sequence ID" value="NC_007622.1"/>
</dbReference>
<dbReference type="SMR" id="Q2YXN1"/>
<dbReference type="KEGG" id="sab:SAB1148"/>
<dbReference type="HOGENOM" id="CLU_028328_1_0_9"/>
<dbReference type="GO" id="GO:0005886">
    <property type="term" value="C:plasma membrane"/>
    <property type="evidence" value="ECO:0007669"/>
    <property type="project" value="UniProtKB-SubCell"/>
</dbReference>
<dbReference type="GO" id="GO:0003723">
    <property type="term" value="F:RNA binding"/>
    <property type="evidence" value="ECO:0007669"/>
    <property type="project" value="UniProtKB-UniRule"/>
</dbReference>
<dbReference type="GO" id="GO:0004521">
    <property type="term" value="F:RNA endonuclease activity"/>
    <property type="evidence" value="ECO:0007669"/>
    <property type="project" value="UniProtKB-UniRule"/>
</dbReference>
<dbReference type="GO" id="GO:0006402">
    <property type="term" value="P:mRNA catabolic process"/>
    <property type="evidence" value="ECO:0007669"/>
    <property type="project" value="UniProtKB-UniRule"/>
</dbReference>
<dbReference type="CDD" id="cd00077">
    <property type="entry name" value="HDc"/>
    <property type="match status" value="1"/>
</dbReference>
<dbReference type="CDD" id="cd22431">
    <property type="entry name" value="KH-I_RNaseY"/>
    <property type="match status" value="1"/>
</dbReference>
<dbReference type="FunFam" id="1.10.3210.10:FF:000003">
    <property type="entry name" value="Ribonuclease Y"/>
    <property type="match status" value="1"/>
</dbReference>
<dbReference type="FunFam" id="3.30.1370.10:FF:000006">
    <property type="entry name" value="Ribonuclease Y"/>
    <property type="match status" value="1"/>
</dbReference>
<dbReference type="Gene3D" id="1.10.3210.10">
    <property type="entry name" value="Hypothetical protein af1432"/>
    <property type="match status" value="1"/>
</dbReference>
<dbReference type="Gene3D" id="3.30.1370.10">
    <property type="entry name" value="K Homology domain, type 1"/>
    <property type="match status" value="1"/>
</dbReference>
<dbReference type="HAMAP" id="MF_00335">
    <property type="entry name" value="RNase_Y"/>
    <property type="match status" value="1"/>
</dbReference>
<dbReference type="InterPro" id="IPR003607">
    <property type="entry name" value="HD/PDEase_dom"/>
</dbReference>
<dbReference type="InterPro" id="IPR006674">
    <property type="entry name" value="HD_domain"/>
</dbReference>
<dbReference type="InterPro" id="IPR006675">
    <property type="entry name" value="HDIG_dom"/>
</dbReference>
<dbReference type="InterPro" id="IPR004087">
    <property type="entry name" value="KH_dom"/>
</dbReference>
<dbReference type="InterPro" id="IPR004088">
    <property type="entry name" value="KH_dom_type_1"/>
</dbReference>
<dbReference type="InterPro" id="IPR036612">
    <property type="entry name" value="KH_dom_type_1_sf"/>
</dbReference>
<dbReference type="InterPro" id="IPR017705">
    <property type="entry name" value="Ribonuclease_Y"/>
</dbReference>
<dbReference type="InterPro" id="IPR022711">
    <property type="entry name" value="RNase_Y_N"/>
</dbReference>
<dbReference type="NCBIfam" id="TIGR00277">
    <property type="entry name" value="HDIG"/>
    <property type="match status" value="1"/>
</dbReference>
<dbReference type="NCBIfam" id="TIGR03319">
    <property type="entry name" value="RNase_Y"/>
    <property type="match status" value="1"/>
</dbReference>
<dbReference type="PANTHER" id="PTHR12826">
    <property type="entry name" value="RIBONUCLEASE Y"/>
    <property type="match status" value="1"/>
</dbReference>
<dbReference type="PANTHER" id="PTHR12826:SF15">
    <property type="entry name" value="RIBONUCLEASE Y"/>
    <property type="match status" value="1"/>
</dbReference>
<dbReference type="Pfam" id="PF01966">
    <property type="entry name" value="HD"/>
    <property type="match status" value="1"/>
</dbReference>
<dbReference type="Pfam" id="PF00013">
    <property type="entry name" value="KH_1"/>
    <property type="match status" value="1"/>
</dbReference>
<dbReference type="Pfam" id="PF12072">
    <property type="entry name" value="RNase_Y_N"/>
    <property type="match status" value="1"/>
</dbReference>
<dbReference type="SMART" id="SM00471">
    <property type="entry name" value="HDc"/>
    <property type="match status" value="1"/>
</dbReference>
<dbReference type="SMART" id="SM00322">
    <property type="entry name" value="KH"/>
    <property type="match status" value="1"/>
</dbReference>
<dbReference type="SUPFAM" id="SSF54791">
    <property type="entry name" value="Eukaryotic type KH-domain (KH-domain type I)"/>
    <property type="match status" value="1"/>
</dbReference>
<dbReference type="SUPFAM" id="SSF109604">
    <property type="entry name" value="HD-domain/PDEase-like"/>
    <property type="match status" value="1"/>
</dbReference>
<dbReference type="PROSITE" id="PS51831">
    <property type="entry name" value="HD"/>
    <property type="match status" value="1"/>
</dbReference>
<dbReference type="PROSITE" id="PS50084">
    <property type="entry name" value="KH_TYPE_1"/>
    <property type="match status" value="1"/>
</dbReference>
<name>RNY_STAAB</name>
<accession>Q2YXN1</accession>
<comment type="function">
    <text evidence="1">Endoribonuclease that initiates mRNA decay.</text>
</comment>
<comment type="subcellular location">
    <subcellularLocation>
        <location evidence="1">Cell membrane</location>
        <topology evidence="1">Single-pass membrane protein</topology>
    </subcellularLocation>
</comment>
<comment type="similarity">
    <text evidence="1">Belongs to the RNase Y family.</text>
</comment>
<protein>
    <recommendedName>
        <fullName evidence="1">Ribonuclease Y</fullName>
        <shortName evidence="1">RNase Y</shortName>
        <ecNumber evidence="1">3.1.-.-</ecNumber>
    </recommendedName>
    <alternativeName>
        <fullName>Conserved virulence factor A</fullName>
    </alternativeName>
</protein>
<keyword id="KW-1003">Cell membrane</keyword>
<keyword id="KW-0255">Endonuclease</keyword>
<keyword id="KW-0378">Hydrolase</keyword>
<keyword id="KW-0472">Membrane</keyword>
<keyword id="KW-0540">Nuclease</keyword>
<keyword id="KW-0694">RNA-binding</keyword>
<keyword id="KW-0812">Transmembrane</keyword>
<keyword id="KW-1133">Transmembrane helix</keyword>
<keyword id="KW-0843">Virulence</keyword>
<feature type="chain" id="PRO_0000294065" description="Ribonuclease Y">
    <location>
        <begin position="1"/>
        <end position="519"/>
    </location>
</feature>
<feature type="transmembrane region" description="Helical" evidence="1">
    <location>
        <begin position="3"/>
        <end position="23"/>
    </location>
</feature>
<feature type="domain" description="KH" evidence="1">
    <location>
        <begin position="209"/>
        <end position="269"/>
    </location>
</feature>
<feature type="domain" description="HD" evidence="2">
    <location>
        <begin position="335"/>
        <end position="428"/>
    </location>
</feature>
<gene>
    <name evidence="1" type="primary">rny</name>
    <name type="synonym">cvfA</name>
    <name type="ordered locus">SAB1148</name>
</gene>